<sequence>MQKVTLGLLVFLAGFPVLDANDLEDKNSPFYYDWHSLQVGGLICAGVLCAMGIIIVMSAKCKCKFGQKSGHHPGETPPLITPGSAQS</sequence>
<comment type="function">
    <text evidence="4 5 6">Associates with and regulates the activity of the sodium/potassium-transporting ATPase (NKA) which transports Na(+) out of the cell and K(+) into the cell (PubMed:17077088). Reduces glutathionylation of the NKA beta-1 subunit ATP1B1, thus reversing glutathionylation-mediated inhibition of ATP1B1 (PubMed:21454534). Induces a hyperpolarization-activated chloride current when expressed in Xenopus oocytes (PubMed:7836447).</text>
</comment>
<comment type="function">
    <molecule>Isoform 1</molecule>
    <text evidence="4">Decreases the apparent K+ and Na+ affinity of the sodium/potassium-transporting ATPase over a large range of membrane potentials.</text>
</comment>
<comment type="function">
    <molecule>Isoform 2</molecule>
    <text evidence="4">Decreases the apparent K+ affinity of the sodium/potassium-transporting ATPase only at slightly negative and positive membrane potentials and increases the apparent Na+ affinity over a large range of membrane potentials.</text>
</comment>
<comment type="subunit">
    <text evidence="1 4 5">Regulatory subunit of the sodium/potassium-transporting ATPase which is composed of a catalytic alpha subunit, a non-catalytic beta subunit and an additional regulatory subunit (PubMed:17077088). Interacts with catalytic alpha subunit ATP1A1 (PubMed:21454534). Also interacts with non-catalytic beta subunit ATP1B1 (By similarity). Interacts with the ATP1A1-ATP1B1, ATP1A2-ATP1B1 and ATP1A3-ATP1B1 NKA isozymes (PubMed:17077088).</text>
</comment>
<comment type="interaction">
    <interactant intactId="EBI-12175685">
        <id>Q14802-3</id>
    </interactant>
    <interactant intactId="EBI-3925742">
        <id>Q8TD06</id>
        <label>AGR3</label>
    </interactant>
    <organismsDiffer>false</organismsDiffer>
    <experiments>3</experiments>
</comment>
<comment type="interaction">
    <interactant intactId="EBI-12175685">
        <id>Q14802-3</id>
    </interactant>
    <interactant intactId="EBI-941819">
        <id>P16157-17</id>
        <label>ANK1</label>
    </interactant>
    <organismsDiffer>false</organismsDiffer>
    <experiments>3</experiments>
</comment>
<comment type="interaction">
    <interactant intactId="EBI-12175685">
        <id>Q14802-3</id>
    </interactant>
    <interactant intactId="EBI-13059134">
        <id>Q13520</id>
        <label>AQP6</label>
    </interactant>
    <organismsDiffer>false</organismsDiffer>
    <experiments>3</experiments>
</comment>
<comment type="interaction">
    <interactant intactId="EBI-12175685">
        <id>Q14802-3</id>
    </interactant>
    <interactant intactId="EBI-17444777">
        <id>O43315</id>
        <label>AQP9</label>
    </interactant>
    <organismsDiffer>false</organismsDiffer>
    <experiments>3</experiments>
</comment>
<comment type="interaction">
    <interactant intactId="EBI-12175685">
        <id>Q14802-3</id>
    </interactant>
    <interactant intactId="EBI-747430">
        <id>Q9BXK5</id>
        <label>BCL2L13</label>
    </interactant>
    <organismsDiffer>false</organismsDiffer>
    <experiments>3</experiments>
</comment>
<comment type="interaction">
    <interactant intactId="EBI-12175685">
        <id>Q14802-3</id>
    </interactant>
    <interactant intactId="EBI-19947314">
        <id>Q8NFU1</id>
        <label>BEST2</label>
    </interactant>
    <organismsDiffer>false</organismsDiffer>
    <experiments>3</experiments>
</comment>
<comment type="interaction">
    <interactant intactId="EBI-12175685">
        <id>Q14802-3</id>
    </interactant>
    <interactant intactId="EBI-7797864">
        <id>P11912</id>
        <label>CD79A</label>
    </interactant>
    <organismsDiffer>false</organismsDiffer>
    <experiments>3</experiments>
</comment>
<comment type="interaction">
    <interactant intactId="EBI-12175685">
        <id>Q14802-3</id>
    </interactant>
    <interactant intactId="EBI-2835940">
        <id>P34972</id>
        <label>CNR2</label>
    </interactant>
    <organismsDiffer>false</organismsDiffer>
    <experiments>3</experiments>
</comment>
<comment type="interaction">
    <interactant intactId="EBI-12175685">
        <id>Q14802-3</id>
    </interactant>
    <interactant intactId="EBI-6942903">
        <id>Q96BA8</id>
        <label>CREB3L1</label>
    </interactant>
    <organismsDiffer>false</organismsDiffer>
    <experiments>3</experiments>
</comment>
<comment type="interaction">
    <interactant intactId="EBI-12175685">
        <id>Q14802-3</id>
    </interactant>
    <interactant intactId="EBI-1046040">
        <id>P00387</id>
        <label>CYB5R3</label>
    </interactant>
    <organismsDiffer>false</organismsDiffer>
    <experiments>3</experiments>
</comment>
<comment type="interaction">
    <interactant intactId="EBI-12175685">
        <id>Q14802-3</id>
    </interactant>
    <interactant intactId="EBI-3915253">
        <id>Q15125</id>
        <label>EBP</label>
    </interactant>
    <organismsDiffer>false</organismsDiffer>
    <experiments>3</experiments>
</comment>
<comment type="interaction">
    <interactant intactId="EBI-12175685">
        <id>Q14802-3</id>
    </interactant>
    <interactant intactId="EBI-711490">
        <id>Q9UKR5</id>
        <label>ERG28</label>
    </interactant>
    <organismsDiffer>false</organismsDiffer>
    <experiments>3</experiments>
</comment>
<comment type="interaction">
    <interactant intactId="EBI-12175685">
        <id>Q14802-3</id>
    </interactant>
    <interactant intactId="EBI-781551">
        <id>Q9Y282</id>
        <label>ERGIC3</label>
    </interactant>
    <organismsDiffer>false</organismsDiffer>
    <experiments>3</experiments>
</comment>
<comment type="interaction">
    <interactant intactId="EBI-12175685">
        <id>Q14802-3</id>
    </interactant>
    <interactant intactId="EBI-18304435">
        <id>Q5JX71</id>
        <label>FAM209A</label>
    </interactant>
    <organismsDiffer>false</organismsDiffer>
    <experiments>3</experiments>
</comment>
<comment type="interaction">
    <interactant intactId="EBI-12175685">
        <id>Q14802-3</id>
    </interactant>
    <interactant intactId="EBI-17187481">
        <id>P12318-2</id>
        <label>FCGR2A</label>
    </interactant>
    <organismsDiffer>false</organismsDiffer>
    <experiments>3</experiments>
</comment>
<comment type="interaction">
    <interactant intactId="EBI-12175685">
        <id>Q14802-3</id>
    </interactant>
    <interactant intactId="EBI-2833872">
        <id>O15552</id>
        <label>FFAR2</label>
    </interactant>
    <organismsDiffer>false</organismsDiffer>
    <experiments>3</experiments>
</comment>
<comment type="interaction">
    <interactant intactId="EBI-12175685">
        <id>Q14802-3</id>
    </interactant>
    <interactant intactId="EBI-2868909">
        <id>Q9H3K2</id>
        <label>GHITM</label>
    </interactant>
    <organismsDiffer>false</organismsDiffer>
    <experiments>3</experiments>
</comment>
<comment type="interaction">
    <interactant intactId="EBI-12175685">
        <id>Q14802-3</id>
    </interactant>
    <interactant intactId="EBI-13345167">
        <id>Q8TDT2</id>
        <label>GPR152</label>
    </interactant>
    <organismsDiffer>false</organismsDiffer>
    <experiments>3</experiments>
</comment>
<comment type="interaction">
    <interactant intactId="EBI-12175685">
        <id>Q14802-3</id>
    </interactant>
    <interactant intactId="EBI-2927498">
        <id>O60883</id>
        <label>GPR37L1</label>
    </interactant>
    <organismsDiffer>false</organismsDiffer>
    <experiments>3</experiments>
</comment>
<comment type="interaction">
    <interactant intactId="EBI-12175685">
        <id>Q14802-3</id>
    </interactant>
    <interactant intactId="EBI-18076404">
        <id>O15529</id>
        <label>GPR42</label>
    </interactant>
    <organismsDiffer>false</organismsDiffer>
    <experiments>3</experiments>
</comment>
<comment type="interaction">
    <interactant intactId="EBI-12175685">
        <id>Q14802-3</id>
    </interactant>
    <interactant intactId="EBI-13067820">
        <id>Q9NZD1</id>
        <label>GPRC5D</label>
    </interactant>
    <organismsDiffer>false</organismsDiffer>
    <experiments>3</experiments>
</comment>
<comment type="interaction">
    <interactant intactId="EBI-12175685">
        <id>Q14802-3</id>
    </interactant>
    <interactant intactId="EBI-18400392">
        <id>P21815</id>
        <label>IBSP</label>
    </interactant>
    <organismsDiffer>false</organismsDiffer>
    <experiments>3</experiments>
</comment>
<comment type="interaction">
    <interactant intactId="EBI-12175685">
        <id>Q14802-3</id>
    </interactant>
    <interactant intactId="EBI-749265">
        <id>Q8N6L0</id>
        <label>KASH5</label>
    </interactant>
    <organismsDiffer>false</organismsDiffer>
    <experiments>3</experiments>
</comment>
<comment type="interaction">
    <interactant intactId="EBI-12175685">
        <id>Q14802-3</id>
    </interactant>
    <interactant intactId="EBI-2924473">
        <id>O15554</id>
        <label>KCNN4</label>
    </interactant>
    <organismsDiffer>false</organismsDiffer>
    <experiments>3</experiments>
</comment>
<comment type="interaction">
    <interactant intactId="EBI-12175685">
        <id>Q14802-3</id>
    </interactant>
    <interactant intactId="EBI-12241118">
        <id>Q16873</id>
        <label>LTC4S</label>
    </interactant>
    <organismsDiffer>false</organismsDiffer>
    <experiments>3</experiments>
</comment>
<comment type="interaction">
    <interactant intactId="EBI-12175685">
        <id>Q14802-3</id>
    </interactant>
    <interactant intactId="EBI-17633886">
        <id>O43934</id>
        <label>MFSD11</label>
    </interactant>
    <organismsDiffer>false</organismsDiffer>
    <experiments>3</experiments>
</comment>
<comment type="interaction">
    <interactant intactId="EBI-12175685">
        <id>Q14802-3</id>
    </interactant>
    <interactant intactId="EBI-3920969">
        <id>Q6N075</id>
        <label>MFSD5</label>
    </interactant>
    <organismsDiffer>false</organismsDiffer>
    <experiments>3</experiments>
</comment>
<comment type="interaction">
    <interactant intactId="EBI-12175685">
        <id>Q14802-3</id>
    </interactant>
    <interactant intactId="EBI-2691601">
        <id>P10620</id>
        <label>MGST1</label>
    </interactant>
    <organismsDiffer>false</organismsDiffer>
    <experiments>3</experiments>
</comment>
<comment type="interaction">
    <interactant intactId="EBI-12175685">
        <id>Q14802-3</id>
    </interactant>
    <interactant intactId="EBI-3923617">
        <id>Q9H2K0</id>
        <label>MTIF3</label>
    </interactant>
    <organismsDiffer>false</organismsDiffer>
    <experiments>3</experiments>
</comment>
<comment type="interaction">
    <interactant intactId="EBI-12175685">
        <id>Q14802-3</id>
    </interactant>
    <interactant intactId="EBI-11721828">
        <id>Q8IY26</id>
        <label>PLPP6</label>
    </interactant>
    <organismsDiffer>false</organismsDiffer>
    <experiments>3</experiments>
</comment>
<comment type="interaction">
    <interactant intactId="EBI-12175685">
        <id>Q14802-3</id>
    </interactant>
    <interactant intactId="EBI-17247926">
        <id>Q9NY72</id>
        <label>SCN3B</label>
    </interactant>
    <organismsDiffer>false</organismsDiffer>
    <experiments>3</experiments>
</comment>
<comment type="interaction">
    <interactant intactId="EBI-12175685">
        <id>Q14802-3</id>
    </interactant>
    <interactant intactId="EBI-1046170">
        <id>O95470</id>
        <label>SGPL1</label>
    </interactant>
    <organismsDiffer>false</organismsDiffer>
    <experiments>3</experiments>
</comment>
<comment type="interaction">
    <interactant intactId="EBI-12175685">
        <id>Q14802-3</id>
    </interactant>
    <interactant intactId="EBI-3923031">
        <id>Q14973</id>
        <label>SLC10A1</label>
    </interactant>
    <organismsDiffer>false</organismsDiffer>
    <experiments>3</experiments>
</comment>
<comment type="interaction">
    <interactant intactId="EBI-12175685">
        <id>Q14802-3</id>
    </interactant>
    <interactant intactId="EBI-18159983">
        <id>Q3KNW5</id>
        <label>SLC10A6</label>
    </interactant>
    <organismsDiffer>false</organismsDiffer>
    <experiments>3</experiments>
</comment>
<comment type="interaction">
    <interactant intactId="EBI-12175685">
        <id>Q14802-3</id>
    </interactant>
    <interactant intactId="EBI-17460560">
        <id>Q6ZSM3</id>
        <label>SLC16A12</label>
    </interactant>
    <organismsDiffer>false</organismsDiffer>
    <experiments>3</experiments>
</comment>
<comment type="interaction">
    <interactant intactId="EBI-12175685">
        <id>Q14802-3</id>
    </interactant>
    <interactant intactId="EBI-17595455">
        <id>P54219-3</id>
        <label>SLC18A1</label>
    </interactant>
    <organismsDiffer>false</organismsDiffer>
    <experiments>3</experiments>
</comment>
<comment type="interaction">
    <interactant intactId="EBI-12175685">
        <id>Q14802-3</id>
    </interactant>
    <interactant intactId="EBI-745376">
        <id>P43005</id>
        <label>SLC1A1</label>
    </interactant>
    <organismsDiffer>false</organismsDiffer>
    <experiments>3</experiments>
</comment>
<comment type="interaction">
    <interactant intactId="EBI-12175685">
        <id>Q14802-3</id>
    </interactant>
    <interactant intactId="EBI-8644112">
        <id>Q9BRI3</id>
        <label>SLC30A2</label>
    </interactant>
    <organismsDiffer>false</organismsDiffer>
    <experiments>3</experiments>
</comment>
<comment type="interaction">
    <interactant intactId="EBI-12175685">
        <id>Q14802-3</id>
    </interactant>
    <interactant intactId="EBI-12870360">
        <id>P78382</id>
        <label>SLC35A1</label>
    </interactant>
    <organismsDiffer>false</organismsDiffer>
    <experiments>3</experiments>
</comment>
<comment type="interaction">
    <interactant intactId="EBI-12175685">
        <id>Q14802-3</id>
    </interactant>
    <interactant intactId="EBI-12147661">
        <id>P78383</id>
        <label>SLC35B1</label>
    </interactant>
    <organismsDiffer>false</organismsDiffer>
    <experiments>3</experiments>
</comment>
<comment type="interaction">
    <interactant intactId="EBI-12175685">
        <id>Q14802-3</id>
    </interactant>
    <interactant intactId="EBI-17295964">
        <id>Q9NQQ7-3</id>
        <label>SLC35C2</label>
    </interactant>
    <organismsDiffer>false</organismsDiffer>
    <experiments>3</experiments>
</comment>
<comment type="interaction">
    <interactant intactId="EBI-12175685">
        <id>Q14802-3</id>
    </interactant>
    <interactant intactId="EBI-12898013">
        <id>Q9NP94</id>
        <label>SLC39A2</label>
    </interactant>
    <organismsDiffer>false</organismsDiffer>
    <experiments>3</experiments>
</comment>
<comment type="interaction">
    <interactant intactId="EBI-12175685">
        <id>Q14802-3</id>
    </interactant>
    <interactant intactId="EBI-17848320">
        <id>Q6ZMD2-2</id>
        <label>SPNS3</label>
    </interactant>
    <organismsDiffer>false</organismsDiffer>
    <experiments>3</experiments>
</comment>
<comment type="interaction">
    <interactant intactId="EBI-12175685">
        <id>Q14802-3</id>
    </interactant>
    <interactant intactId="EBI-12200293">
        <id>P0DN84</id>
        <label>STRIT1</label>
    </interactant>
    <organismsDiffer>false</organismsDiffer>
    <experiments>3</experiments>
</comment>
<comment type="interaction">
    <interactant intactId="EBI-12175685">
        <id>Q14802-3</id>
    </interactant>
    <interactant intactId="EBI-1394295">
        <id>Q13277</id>
        <label>STX3</label>
    </interactant>
    <organismsDiffer>false</organismsDiffer>
    <experiments>3</experiments>
</comment>
<comment type="interaction">
    <interactant intactId="EBI-12175685">
        <id>Q14802-3</id>
    </interactant>
    <interactant intactId="EBI-1047996">
        <id>O14925</id>
        <label>TIMM23</label>
    </interactant>
    <organismsDiffer>false</organismsDiffer>
    <experiments>3</experiments>
</comment>
<comment type="interaction">
    <interactant intactId="EBI-12175685">
        <id>Q14802-3</id>
    </interactant>
    <interactant intactId="EBI-6268651">
        <id>Q9NPL8</id>
        <label>TIMMDC1</label>
    </interactant>
    <organismsDiffer>false</organismsDiffer>
    <experiments>3</experiments>
</comment>
<comment type="interaction">
    <interactant intactId="EBI-12175685">
        <id>Q14802-3</id>
    </interactant>
    <interactant intactId="EBI-11337932">
        <id>Q96CP7</id>
        <label>TLCD1</label>
    </interactant>
    <organismsDiffer>false</organismsDiffer>
    <experiments>3</experiments>
</comment>
<comment type="interaction">
    <interactant intactId="EBI-12175685">
        <id>Q14802-3</id>
    </interactant>
    <interactant intactId="EBI-1045825">
        <id>P55061</id>
        <label>TMBIM6</label>
    </interactant>
    <organismsDiffer>false</organismsDiffer>
    <experiments>3</experiments>
</comment>
<comment type="interaction">
    <interactant intactId="EBI-12175685">
        <id>Q14802-3</id>
    </interactant>
    <interactant intactId="EBI-11724423">
        <id>Q7Z7N9</id>
        <label>TMEM179B</label>
    </interactant>
    <organismsDiffer>false</organismsDiffer>
    <experiments>3</experiments>
</comment>
<comment type="interaction">
    <interactant intactId="EBI-12175685">
        <id>Q14802-3</id>
    </interactant>
    <interactant intactId="EBI-12366453">
        <id>P56557</id>
        <label>TMEM50B</label>
    </interactant>
    <organismsDiffer>false</organismsDiffer>
    <experiments>3</experiments>
</comment>
<comment type="interaction">
    <interactant intactId="EBI-12175685">
        <id>Q14802-3</id>
    </interactant>
    <interactant intactId="EBI-18178701">
        <id>Q4KMG9</id>
        <label>TMEM52B</label>
    </interactant>
    <organismsDiffer>false</organismsDiffer>
    <experiments>3</experiments>
</comment>
<comment type="interaction">
    <interactant intactId="EBI-12175685">
        <id>Q14802-3</id>
    </interactant>
    <interactant intactId="EBI-11742770">
        <id>Q96HE8</id>
        <label>TMEM80</label>
    </interactant>
    <organismsDiffer>false</organismsDiffer>
    <experiments>3</experiments>
</comment>
<comment type="interaction">
    <interactant intactId="EBI-12175685">
        <id>Q14802-3</id>
    </interactant>
    <interactant intactId="EBI-12015604">
        <id>Q8N2M4</id>
        <label>TMEM86A</label>
    </interactant>
    <organismsDiffer>false</organismsDiffer>
    <experiments>3</experiments>
</comment>
<comment type="interaction">
    <interactant intactId="EBI-12175685">
        <id>Q14802-3</id>
    </interactant>
    <interactant intactId="EBI-12111910">
        <id>Q5BJF2</id>
        <label>TMEM97</label>
    </interactant>
    <organismsDiffer>false</organismsDiffer>
    <experiments>3</experiments>
</comment>
<comment type="interaction">
    <interactant intactId="EBI-12175685">
        <id>Q14802-3</id>
    </interactant>
    <interactant intactId="EBI-12195249">
        <id>Q5TGU0</id>
        <label>TSPO2</label>
    </interactant>
    <organismsDiffer>false</organismsDiffer>
    <experiments>3</experiments>
</comment>
<comment type="subcellular location">
    <subcellularLocation>
        <location evidence="10">Cell membrane</location>
        <topology evidence="2">Single-pass type I membrane protein</topology>
    </subcellularLocation>
</comment>
<comment type="alternative products">
    <event type="alternative splicing"/>
    <isoform>
        <id>Q14802-1</id>
        <name>1</name>
        <name evidence="8">FXYD3-sf</name>
        <sequence type="displayed"/>
    </isoform>
    <isoform>
        <id>Q14802-2</id>
        <name>2</name>
        <name evidence="8">FXYD3-lf</name>
        <sequence type="described" ref="VSP_034598"/>
    </isoform>
    <isoform>
        <id>Q14802-3</id>
        <name>3</name>
        <sequence type="described" ref="VSP_045716"/>
    </isoform>
    <isoform>
        <id>Q14802-4</id>
        <name>4</name>
        <sequence type="described" ref="VSP_034598 VSP_047287"/>
    </isoform>
    <isoform>
        <id>Q14802-5</id>
        <name>5</name>
        <sequence type="described" ref="VSP_047286"/>
    </isoform>
</comment>
<comment type="tissue specificity">
    <text evidence="4">Isoform 1: Expressed mainly in differentiated cells (at protein level). Isoform 2: Expressed mainly in undifferentiated cells (at protein level).</text>
</comment>
<comment type="PTM">
    <text evidence="5">Glutathionylated.</text>
</comment>
<comment type="miscellaneous">
    <text>Marker of a cell type preferentially transformed by neu or ras oncoprotein.</text>
</comment>
<comment type="similarity">
    <text evidence="10">Belongs to the FXYD family.</text>
</comment>
<comment type="online information" name="Atlas of Genetics and Cytogenetics in Oncology and Haematology">
    <link uri="https://atlasgeneticsoncology.org/gene/43704/FXYD3"/>
</comment>
<evidence type="ECO:0000250" key="1">
    <source>
        <dbReference type="UniProtKB" id="Q61835"/>
    </source>
</evidence>
<evidence type="ECO:0000255" key="2"/>
<evidence type="ECO:0000256" key="3">
    <source>
        <dbReference type="SAM" id="MobiDB-lite"/>
    </source>
</evidence>
<evidence type="ECO:0000269" key="4">
    <source>
    </source>
</evidence>
<evidence type="ECO:0000269" key="5">
    <source>
    </source>
</evidence>
<evidence type="ECO:0000269" key="6">
    <source>
    </source>
</evidence>
<evidence type="ECO:0000303" key="7">
    <source>
    </source>
</evidence>
<evidence type="ECO:0000303" key="8">
    <source>
    </source>
</evidence>
<evidence type="ECO:0000303" key="9">
    <source ref="2"/>
</evidence>
<evidence type="ECO:0000305" key="10"/>
<gene>
    <name type="primary">FXYD3</name>
    <name type="synonym">MAT8</name>
    <name type="synonym">PLML</name>
</gene>
<dbReference type="EMBL" id="X93036">
    <property type="protein sequence ID" value="CAA63604.1"/>
    <property type="molecule type" value="mRNA"/>
</dbReference>
<dbReference type="EMBL" id="U28249">
    <property type="protein sequence ID" value="AAA73922.1"/>
    <property type="molecule type" value="mRNA"/>
</dbReference>
<dbReference type="EMBL" id="BT006712">
    <property type="protein sequence ID" value="AAP35358.1"/>
    <property type="molecule type" value="mRNA"/>
</dbReference>
<dbReference type="EMBL" id="CR456945">
    <property type="protein sequence ID" value="CAG33226.1"/>
    <property type="molecule type" value="mRNA"/>
</dbReference>
<dbReference type="EMBL" id="CR542197">
    <property type="protein sequence ID" value="CAG46994.1"/>
    <property type="molecule type" value="mRNA"/>
</dbReference>
<dbReference type="EMBL" id="AC020907">
    <property type="status" value="NOT_ANNOTATED_CDS"/>
    <property type="molecule type" value="Genomic_DNA"/>
</dbReference>
<dbReference type="EMBL" id="BC005238">
    <property type="protein sequence ID" value="AAH05238.1"/>
    <property type="molecule type" value="mRNA"/>
</dbReference>
<dbReference type="EMBL" id="BC090044">
    <property type="protein sequence ID" value="AAH90044.1"/>
    <property type="molecule type" value="mRNA"/>
</dbReference>
<dbReference type="EMBL" id="BU157560">
    <property type="status" value="NOT_ANNOTATED_CDS"/>
    <property type="molecule type" value="mRNA"/>
</dbReference>
<dbReference type="CCDS" id="CCDS12442.1">
    <molecule id="Q14802-1"/>
</dbReference>
<dbReference type="CCDS" id="CCDS12443.1">
    <molecule id="Q14802-2"/>
</dbReference>
<dbReference type="CCDS" id="CCDS46048.1">
    <molecule id="Q14802-3"/>
</dbReference>
<dbReference type="CCDS" id="CCDS46049.1">
    <molecule id="Q14802-4"/>
</dbReference>
<dbReference type="CCDS" id="CCDS46050.1">
    <molecule id="Q14802-5"/>
</dbReference>
<dbReference type="PIR" id="A55571">
    <property type="entry name" value="A55571"/>
</dbReference>
<dbReference type="RefSeq" id="NP_001129479.1">
    <molecule id="Q14802-3"/>
    <property type="nucleotide sequence ID" value="NM_001136007.2"/>
</dbReference>
<dbReference type="RefSeq" id="NP_001129480.1">
    <molecule id="Q14802-4"/>
    <property type="nucleotide sequence ID" value="NM_001136008.2"/>
</dbReference>
<dbReference type="RefSeq" id="NP_001129481.1">
    <molecule id="Q14802-5"/>
    <property type="nucleotide sequence ID" value="NM_001136009.2"/>
</dbReference>
<dbReference type="RefSeq" id="NP_001129482.1">
    <molecule id="Q14802-5"/>
    <property type="nucleotide sequence ID" value="NM_001136010.2"/>
</dbReference>
<dbReference type="RefSeq" id="NP_001129483.1">
    <molecule id="Q14802-1"/>
    <property type="nucleotide sequence ID" value="NM_001136011.2"/>
</dbReference>
<dbReference type="RefSeq" id="NP_001129484.1">
    <molecule id="Q14802-2"/>
    <property type="nucleotide sequence ID" value="NM_001136012.2"/>
</dbReference>
<dbReference type="RefSeq" id="NP_001374278.1">
    <molecule id="Q14802-1"/>
    <property type="nucleotide sequence ID" value="NM_001387349.1"/>
</dbReference>
<dbReference type="RefSeq" id="NP_001374279.1">
    <molecule id="Q14802-1"/>
    <property type="nucleotide sequence ID" value="NM_001387350.1"/>
</dbReference>
<dbReference type="RefSeq" id="NP_001374281.1">
    <molecule id="Q14802-1"/>
    <property type="nucleotide sequence ID" value="NM_001387352.1"/>
</dbReference>
<dbReference type="RefSeq" id="NP_001374282.1">
    <molecule id="Q14802-1"/>
    <property type="nucleotide sequence ID" value="NM_001387353.1"/>
</dbReference>
<dbReference type="RefSeq" id="NP_005962.1">
    <molecule id="Q14802-1"/>
    <property type="nucleotide sequence ID" value="NM_005971.4"/>
</dbReference>
<dbReference type="RefSeq" id="NP_068710.1">
    <molecule id="Q14802-2"/>
    <property type="nucleotide sequence ID" value="NM_021910.3"/>
</dbReference>
<dbReference type="RefSeq" id="XP_005259053.1">
    <property type="nucleotide sequence ID" value="XM_005258996.4"/>
</dbReference>
<dbReference type="RefSeq" id="XP_016882366.1">
    <property type="nucleotide sequence ID" value="XM_017026877.1"/>
</dbReference>
<dbReference type="RefSeq" id="XP_016882367.1">
    <property type="nucleotide sequence ID" value="XM_017026878.1"/>
</dbReference>
<dbReference type="SMR" id="Q14802"/>
<dbReference type="BioGRID" id="111364">
    <property type="interactions" value="94"/>
</dbReference>
<dbReference type="ComplexPortal" id="CPX-8141">
    <property type="entry name" value="Sodium:potassium-exchanging ATPase complex, FXYD3 variant"/>
</dbReference>
<dbReference type="FunCoup" id="Q14802">
    <property type="interactions" value="61"/>
</dbReference>
<dbReference type="IntAct" id="Q14802">
    <property type="interactions" value="90"/>
</dbReference>
<dbReference type="MINT" id="Q14802"/>
<dbReference type="STRING" id="9606.ENSP00000473929"/>
<dbReference type="TCDB" id="1.A.27.1.5">
    <property type="family name" value="the phospholemman (plm) family"/>
</dbReference>
<dbReference type="iPTMnet" id="Q14802"/>
<dbReference type="PhosphoSitePlus" id="Q14802"/>
<dbReference type="SwissPalm" id="Q14802"/>
<dbReference type="BioMuta" id="FXYD3"/>
<dbReference type="jPOST" id="Q14802"/>
<dbReference type="MassIVE" id="Q14802"/>
<dbReference type="PaxDb" id="9606-ENSP00000473929"/>
<dbReference type="PeptideAtlas" id="Q14802"/>
<dbReference type="ProteomicsDB" id="25564"/>
<dbReference type="ProteomicsDB" id="30673"/>
<dbReference type="ProteomicsDB" id="60187">
    <molecule id="Q14802-1"/>
</dbReference>
<dbReference type="ProteomicsDB" id="60188">
    <molecule id="Q14802-2"/>
</dbReference>
<dbReference type="Pumba" id="Q14802"/>
<dbReference type="Antibodypedia" id="2266">
    <property type="antibodies" value="179 antibodies from 19 providers"/>
</dbReference>
<dbReference type="DNASU" id="5349"/>
<dbReference type="Ensembl" id="ENST00000344013.10">
    <molecule id="Q14802-2"/>
    <property type="protein sequence ID" value="ENSP00000339499.7"/>
    <property type="gene ID" value="ENSG00000089356.19"/>
</dbReference>
<dbReference type="Ensembl" id="ENST00000346446.9">
    <molecule id="Q14802-2"/>
    <property type="protein sequence ID" value="ENSP00000328259.5"/>
    <property type="gene ID" value="ENSG00000089356.19"/>
</dbReference>
<dbReference type="Ensembl" id="ENST00000435734.6">
    <molecule id="Q14802-2"/>
    <property type="protein sequence ID" value="ENSP00000389770.2"/>
    <property type="gene ID" value="ENSG00000089356.19"/>
</dbReference>
<dbReference type="Ensembl" id="ENST00000603181.5">
    <molecule id="Q14802-1"/>
    <property type="protein sequence ID" value="ENSP00000474851.1"/>
    <property type="gene ID" value="ENSG00000089356.19"/>
</dbReference>
<dbReference type="Ensembl" id="ENST00000603449.5">
    <molecule id="Q14802-5"/>
    <property type="protein sequence ID" value="ENSP00000474055.1"/>
    <property type="gene ID" value="ENSG00000089356.19"/>
</dbReference>
<dbReference type="Ensembl" id="ENST00000604255.5">
    <molecule id="Q14802-3"/>
    <property type="protein sequence ID" value="ENSP00000473929.1"/>
    <property type="gene ID" value="ENSG00000089356.19"/>
</dbReference>
<dbReference type="Ensembl" id="ENST00000604404.6">
    <molecule id="Q14802-1"/>
    <property type="protein sequence ID" value="ENSP00000474438.1"/>
    <property type="gene ID" value="ENSG00000089356.19"/>
</dbReference>
<dbReference type="Ensembl" id="ENST00000604621.5">
    <molecule id="Q14802-1"/>
    <property type="protein sequence ID" value="ENSP00000474526.1"/>
    <property type="gene ID" value="ENSG00000089356.19"/>
</dbReference>
<dbReference type="Ensembl" id="ENST00000605552.5">
    <molecule id="Q14802-5"/>
    <property type="protein sequence ID" value="ENSP00000474855.1"/>
    <property type="gene ID" value="ENSG00000089356.19"/>
</dbReference>
<dbReference type="Ensembl" id="ENST00000605677.1">
    <molecule id="Q14802-4"/>
    <property type="protein sequence ID" value="ENSP00000474622.1"/>
    <property type="gene ID" value="ENSG00000089356.19"/>
</dbReference>
<dbReference type="GeneID" id="5349"/>
<dbReference type="KEGG" id="hsa:5349"/>
<dbReference type="MANE-Select" id="ENST00000604404.6">
    <property type="protein sequence ID" value="ENSP00000474438.1"/>
    <property type="RefSeq nucleotide sequence ID" value="NM_005971.4"/>
    <property type="RefSeq protein sequence ID" value="NP_005962.1"/>
</dbReference>
<dbReference type="UCSC" id="uc002nxv.4">
    <molecule id="Q14802-1"/>
    <property type="organism name" value="human"/>
</dbReference>
<dbReference type="AGR" id="HGNC:4027"/>
<dbReference type="CTD" id="5349"/>
<dbReference type="DisGeNET" id="5349"/>
<dbReference type="GeneCards" id="FXYD3"/>
<dbReference type="HGNC" id="HGNC:4027">
    <property type="gene designation" value="FXYD3"/>
</dbReference>
<dbReference type="HPA" id="ENSG00000089356">
    <property type="expression patterns" value="Tissue enhanced (intestine)"/>
</dbReference>
<dbReference type="MIM" id="604996">
    <property type="type" value="gene"/>
</dbReference>
<dbReference type="neXtProt" id="NX_Q14802"/>
<dbReference type="OpenTargets" id="ENSG00000089356"/>
<dbReference type="PharmGKB" id="PA28443"/>
<dbReference type="VEuPathDB" id="HostDB:ENSG00000089356"/>
<dbReference type="eggNOG" id="ENOG502S9Z9">
    <property type="taxonomic scope" value="Eukaryota"/>
</dbReference>
<dbReference type="GeneTree" id="ENSGT00940000153062"/>
<dbReference type="HOGENOM" id="CLU_1781598_0_0_1"/>
<dbReference type="InParanoid" id="Q14802"/>
<dbReference type="OMA" id="IVLMSEC"/>
<dbReference type="OrthoDB" id="9888529at2759"/>
<dbReference type="PAN-GO" id="Q14802">
    <property type="GO annotations" value="2 GO annotations based on evolutionary models"/>
</dbReference>
<dbReference type="PhylomeDB" id="Q14802"/>
<dbReference type="TreeFam" id="TF333443"/>
<dbReference type="PathwayCommons" id="Q14802"/>
<dbReference type="Reactome" id="R-HSA-5578775">
    <property type="pathway name" value="Ion homeostasis"/>
</dbReference>
<dbReference type="Reactome" id="R-HSA-936837">
    <property type="pathway name" value="Ion transport by P-type ATPases"/>
</dbReference>
<dbReference type="Reactome" id="R-HSA-9679191">
    <property type="pathway name" value="Potential therapeutics for SARS"/>
</dbReference>
<dbReference type="SignaLink" id="Q14802"/>
<dbReference type="BioGRID-ORCS" id="5349">
    <property type="hits" value="5 hits in 1136 CRISPR screens"/>
</dbReference>
<dbReference type="ChiTaRS" id="FXYD3">
    <property type="organism name" value="human"/>
</dbReference>
<dbReference type="GeneWiki" id="FXYD3"/>
<dbReference type="GenomeRNAi" id="5349"/>
<dbReference type="Pharos" id="Q14802">
    <property type="development level" value="Tbio"/>
</dbReference>
<dbReference type="PRO" id="PR:Q14802"/>
<dbReference type="Proteomes" id="UP000005640">
    <property type="component" value="Chromosome 19"/>
</dbReference>
<dbReference type="RNAct" id="Q14802">
    <property type="molecule type" value="protein"/>
</dbReference>
<dbReference type="Bgee" id="ENSG00000089356">
    <property type="expression patterns" value="Expressed in mucosa of transverse colon and 96 other cell types or tissues"/>
</dbReference>
<dbReference type="ExpressionAtlas" id="Q14802">
    <property type="expression patterns" value="baseline and differential"/>
</dbReference>
<dbReference type="GO" id="GO:0005789">
    <property type="term" value="C:endoplasmic reticulum membrane"/>
    <property type="evidence" value="ECO:0007669"/>
    <property type="project" value="Ensembl"/>
</dbReference>
<dbReference type="GO" id="GO:0070062">
    <property type="term" value="C:extracellular exosome"/>
    <property type="evidence" value="ECO:0007005"/>
    <property type="project" value="UniProtKB"/>
</dbReference>
<dbReference type="GO" id="GO:0005886">
    <property type="term" value="C:plasma membrane"/>
    <property type="evidence" value="ECO:0000304"/>
    <property type="project" value="Reactome"/>
</dbReference>
<dbReference type="GO" id="GO:0051117">
    <property type="term" value="F:ATPase binding"/>
    <property type="evidence" value="ECO:0007669"/>
    <property type="project" value="Ensembl"/>
</dbReference>
<dbReference type="GO" id="GO:0005254">
    <property type="term" value="F:chloride channel activity"/>
    <property type="evidence" value="ECO:0000304"/>
    <property type="project" value="ProtInc"/>
</dbReference>
<dbReference type="GO" id="GO:0017080">
    <property type="term" value="F:sodium channel regulator activity"/>
    <property type="evidence" value="ECO:0000318"/>
    <property type="project" value="GO_Central"/>
</dbReference>
<dbReference type="GO" id="GO:0006821">
    <property type="term" value="P:chloride transport"/>
    <property type="evidence" value="ECO:0000304"/>
    <property type="project" value="ProtInc"/>
</dbReference>
<dbReference type="GO" id="GO:1903278">
    <property type="term" value="P:positive regulation of sodium ion export across plasma membrane"/>
    <property type="evidence" value="ECO:0000318"/>
    <property type="project" value="GO_Central"/>
</dbReference>
<dbReference type="GO" id="GO:0006813">
    <property type="term" value="P:potassium ion transport"/>
    <property type="evidence" value="ECO:0007669"/>
    <property type="project" value="UniProtKB-KW"/>
</dbReference>
<dbReference type="GO" id="GO:0006814">
    <property type="term" value="P:sodium ion transport"/>
    <property type="evidence" value="ECO:0007669"/>
    <property type="project" value="UniProtKB-KW"/>
</dbReference>
<dbReference type="CDD" id="cd20328">
    <property type="entry name" value="FXYD3-like"/>
    <property type="match status" value="1"/>
</dbReference>
<dbReference type="FunFam" id="1.20.5.780:FF:000006">
    <property type="entry name" value="FXYD domain-containing ion transport regulator"/>
    <property type="match status" value="1"/>
</dbReference>
<dbReference type="Gene3D" id="1.20.5.780">
    <property type="entry name" value="Single helix bin"/>
    <property type="match status" value="1"/>
</dbReference>
<dbReference type="InterPro" id="IPR047297">
    <property type="entry name" value="FXYD_motif"/>
</dbReference>
<dbReference type="InterPro" id="IPR000272">
    <property type="entry name" value="Ion-transport_regulator_FXYD"/>
</dbReference>
<dbReference type="PANTHER" id="PTHR14132:SF11">
    <property type="entry name" value="FXYD DOMAIN-CONTAINING ION TRANSPORT REGULATOR 3"/>
    <property type="match status" value="1"/>
</dbReference>
<dbReference type="PANTHER" id="PTHR14132">
    <property type="entry name" value="SODIUM/POTASSIUM-TRANSPORTING ATPASE SUBUNIT GAMMA"/>
    <property type="match status" value="1"/>
</dbReference>
<dbReference type="Pfam" id="PF02038">
    <property type="entry name" value="ATP1G1_PLM_MAT8"/>
    <property type="match status" value="1"/>
</dbReference>
<dbReference type="PROSITE" id="PS01310">
    <property type="entry name" value="FXYD"/>
    <property type="match status" value="1"/>
</dbReference>
<name>FXYD3_HUMAN</name>
<keyword id="KW-0025">Alternative splicing</keyword>
<keyword id="KW-1003">Cell membrane</keyword>
<keyword id="KW-0903">Direct protein sequencing</keyword>
<keyword id="KW-0318">Glutathionylation</keyword>
<keyword id="KW-0406">Ion transport</keyword>
<keyword id="KW-0472">Membrane</keyword>
<keyword id="KW-0630">Potassium</keyword>
<keyword id="KW-0633">Potassium transport</keyword>
<keyword id="KW-1267">Proteomics identification</keyword>
<keyword id="KW-1185">Reference proteome</keyword>
<keyword id="KW-0732">Signal</keyword>
<keyword id="KW-0915">Sodium</keyword>
<keyword id="KW-0739">Sodium transport</keyword>
<keyword id="KW-0740">Sodium/potassium transport</keyword>
<keyword id="KW-0812">Transmembrane</keyword>
<keyword id="KW-1133">Transmembrane helix</keyword>
<keyword id="KW-0813">Transport</keyword>
<feature type="signal peptide" evidence="4">
    <location>
        <begin position="1"/>
        <end position="20"/>
    </location>
</feature>
<feature type="chain" id="PRO_0000010362" description="FXYD domain-containing ion transport regulator 3">
    <location>
        <begin position="21"/>
        <end position="87"/>
    </location>
</feature>
<feature type="topological domain" description="Extracellular" evidence="2">
    <location>
        <begin position="21"/>
        <end position="38"/>
    </location>
</feature>
<feature type="transmembrane region" description="Helical" evidence="2">
    <location>
        <begin position="39"/>
        <end position="59"/>
    </location>
</feature>
<feature type="topological domain" description="Cytoplasmic" evidence="2">
    <location>
        <begin position="60"/>
        <end position="87"/>
    </location>
</feature>
<feature type="region of interest" description="Disordered" evidence="3">
    <location>
        <begin position="66"/>
        <end position="87"/>
    </location>
</feature>
<feature type="splice variant" id="VSP_045716" description="In isoform 3." evidence="7">
    <original>M</original>
    <variation>MGRGYSGALQARGGLEEPLERGLRGPSFTQSPLHGAAAAYLSAQRDASLPVPGQRSDM</variation>
    <location>
        <position position="1"/>
    </location>
</feature>
<feature type="splice variant" id="VSP_047286" description="In isoform 5." evidence="10">
    <original>DWHSLQVGGLICAGVLCAMGIIIVMSAKCKCKFGQKSGHHPGETPPLITPGSAQS</original>
    <variation>GESPCPLSPPHNPTYCLVPRVPIQGWGLT</variation>
    <location>
        <begin position="33"/>
        <end position="87"/>
    </location>
</feature>
<feature type="splice variant" id="VSP_034598" description="In isoform 2 and isoform 4." evidence="9">
    <original>S</original>
    <variation>SEWRSSGEQAGRGWGSPPLTTQLSPTG</variation>
    <location>
        <position position="58"/>
    </location>
</feature>
<feature type="splice variant" id="VSP_047287" description="In isoform 4." evidence="10">
    <location>
        <begin position="71"/>
        <end position="87"/>
    </location>
</feature>
<feature type="sequence variant" id="VAR_049109" description="In dbSNP:rs35578165.">
    <original>G</original>
    <variation>S</variation>
    <location>
        <position position="40"/>
    </location>
</feature>
<feature type="mutagenesis site" description="Abolishes glutathionylation but does not affect interaction with ATP1B1; when associated with S-49; S-61 and S-63." evidence="5">
    <original>C</original>
    <variation>S</variation>
    <location>
        <position position="44"/>
    </location>
</feature>
<feature type="mutagenesis site" description="Abolishes glutathionylation but does not affect interaction with ATP1B1; when associated with S-43; S-61 and S-63." evidence="5">
    <original>C</original>
    <variation>S</variation>
    <location>
        <position position="49"/>
    </location>
</feature>
<feature type="mutagenesis site" description="Abolishes glutathionylation but does not affect interaction with ATP1B1; when associated with S-43; S-49 and S-63." evidence="5">
    <original>C</original>
    <variation>S</variation>
    <location>
        <position position="61"/>
    </location>
</feature>
<feature type="mutagenesis site" description="Abolishes glutathionylation but does not affect interaction with ATP1B1; when associated with S-43; S-49 and S-61." evidence="5">
    <original>C</original>
    <variation>S</variation>
    <location>
        <position position="63"/>
    </location>
</feature>
<feature type="sequence conflict" description="In Ref. 2; AAA73922." evidence="10" ref="2">
    <location>
        <begin position="36"/>
        <end position="37"/>
    </location>
</feature>
<accession>Q14802</accession>
<accession>A6NDE0</accession>
<accession>C9JDU2</accession>
<accession>F5H174</accession>
<accession>F8WB34</accession>
<accession>Q13211</accession>
<accession>Q6IB59</accession>
<reference key="1">
    <citation type="journal article" date="1995" name="J. Biol. Chem.">
        <title>Mat-8, a novel phospholemman-like protein expressed in human breast tumors, induces a chloride conductance in Xenopus oocytes.</title>
        <authorList>
            <person name="Morrison B.W."/>
            <person name="Moorman J.R."/>
            <person name="Kowdley G.C."/>
            <person name="Kobayashi Y.M."/>
            <person name="Jones L.R."/>
            <person name="Leder P."/>
        </authorList>
    </citation>
    <scope>NUCLEOTIDE SEQUENCE [MRNA] (ISOFORM 1)</scope>
    <scope>FUNCTION</scope>
    <source>
        <tissue>Mammary gland</tissue>
    </source>
</reference>
<reference key="2">
    <citation type="submission" date="1995-07" db="EMBL/GenBank/DDBJ databases">
        <title>Two novel cDNAs express specifically in RA-treated human lung adenocarcinoma cell line GLC-82.</title>
        <authorList>
            <person name="Lei W."/>
            <person name="Wu M."/>
        </authorList>
    </citation>
    <scope>NUCLEOTIDE SEQUENCE [MRNA] (ISOFORM 2)</scope>
    <source>
        <tissue>Lung carcinoma</tissue>
    </source>
</reference>
<reference key="3">
    <citation type="submission" date="2003-05" db="EMBL/GenBank/DDBJ databases">
        <title>Cloning of human full-length CDSs in BD Creator(TM) system donor vector.</title>
        <authorList>
            <person name="Kalnine N."/>
            <person name="Chen X."/>
            <person name="Rolfs A."/>
            <person name="Halleck A."/>
            <person name="Hines L."/>
            <person name="Eisenstein S."/>
            <person name="Koundinya M."/>
            <person name="Raphael J."/>
            <person name="Moreira D."/>
            <person name="Kelley T."/>
            <person name="LaBaer J."/>
            <person name="Lin Y."/>
            <person name="Phelan M."/>
            <person name="Farmer A."/>
        </authorList>
    </citation>
    <scope>NUCLEOTIDE SEQUENCE [LARGE SCALE MRNA] (ISOFORM 1)</scope>
</reference>
<reference key="4">
    <citation type="submission" date="2004-06" db="EMBL/GenBank/DDBJ databases">
        <title>Cloning of human full open reading frames in Gateway(TM) system entry vector (pDONR201).</title>
        <authorList>
            <person name="Halleck A."/>
            <person name="Ebert L."/>
            <person name="Mkoundinya M."/>
            <person name="Schick M."/>
            <person name="Eisenstein S."/>
            <person name="Neubert P."/>
            <person name="Kstrang K."/>
            <person name="Schatten R."/>
            <person name="Shen B."/>
            <person name="Henze S."/>
            <person name="Mar W."/>
            <person name="Korn B."/>
            <person name="Zuo D."/>
            <person name="Hu Y."/>
            <person name="LaBaer J."/>
        </authorList>
    </citation>
    <scope>NUCLEOTIDE SEQUENCE [LARGE SCALE MRNA] (ISOFORM 1)</scope>
</reference>
<reference key="5">
    <citation type="journal article" date="2004" name="Nature">
        <title>The DNA sequence and biology of human chromosome 19.</title>
        <authorList>
            <person name="Grimwood J."/>
            <person name="Gordon L.A."/>
            <person name="Olsen A.S."/>
            <person name="Terry A."/>
            <person name="Schmutz J."/>
            <person name="Lamerdin J.E."/>
            <person name="Hellsten U."/>
            <person name="Goodstein D."/>
            <person name="Couronne O."/>
            <person name="Tran-Gyamfi M."/>
            <person name="Aerts A."/>
            <person name="Altherr M."/>
            <person name="Ashworth L."/>
            <person name="Bajorek E."/>
            <person name="Black S."/>
            <person name="Branscomb E."/>
            <person name="Caenepeel S."/>
            <person name="Carrano A.V."/>
            <person name="Caoile C."/>
            <person name="Chan Y.M."/>
            <person name="Christensen M."/>
            <person name="Cleland C.A."/>
            <person name="Copeland A."/>
            <person name="Dalin E."/>
            <person name="Dehal P."/>
            <person name="Denys M."/>
            <person name="Detter J.C."/>
            <person name="Escobar J."/>
            <person name="Flowers D."/>
            <person name="Fotopulos D."/>
            <person name="Garcia C."/>
            <person name="Georgescu A.M."/>
            <person name="Glavina T."/>
            <person name="Gomez M."/>
            <person name="Gonzales E."/>
            <person name="Groza M."/>
            <person name="Hammon N."/>
            <person name="Hawkins T."/>
            <person name="Haydu L."/>
            <person name="Ho I."/>
            <person name="Huang W."/>
            <person name="Israni S."/>
            <person name="Jett J."/>
            <person name="Kadner K."/>
            <person name="Kimball H."/>
            <person name="Kobayashi A."/>
            <person name="Larionov V."/>
            <person name="Leem S.-H."/>
            <person name="Lopez F."/>
            <person name="Lou Y."/>
            <person name="Lowry S."/>
            <person name="Malfatti S."/>
            <person name="Martinez D."/>
            <person name="McCready P.M."/>
            <person name="Medina C."/>
            <person name="Morgan J."/>
            <person name="Nelson K."/>
            <person name="Nolan M."/>
            <person name="Ovcharenko I."/>
            <person name="Pitluck S."/>
            <person name="Pollard M."/>
            <person name="Popkie A.P."/>
            <person name="Predki P."/>
            <person name="Quan G."/>
            <person name="Ramirez L."/>
            <person name="Rash S."/>
            <person name="Retterer J."/>
            <person name="Rodriguez A."/>
            <person name="Rogers S."/>
            <person name="Salamov A."/>
            <person name="Salazar A."/>
            <person name="She X."/>
            <person name="Smith D."/>
            <person name="Slezak T."/>
            <person name="Solovyev V."/>
            <person name="Thayer N."/>
            <person name="Tice H."/>
            <person name="Tsai M."/>
            <person name="Ustaszewska A."/>
            <person name="Vo N."/>
            <person name="Wagner M."/>
            <person name="Wheeler J."/>
            <person name="Wu K."/>
            <person name="Xie G."/>
            <person name="Yang J."/>
            <person name="Dubchak I."/>
            <person name="Furey T.S."/>
            <person name="DeJong P."/>
            <person name="Dickson M."/>
            <person name="Gordon D."/>
            <person name="Eichler E.E."/>
            <person name="Pennacchio L.A."/>
            <person name="Richardson P."/>
            <person name="Stubbs L."/>
            <person name="Rokhsar D.S."/>
            <person name="Myers R.M."/>
            <person name="Rubin E.M."/>
            <person name="Lucas S.M."/>
        </authorList>
    </citation>
    <scope>NUCLEOTIDE SEQUENCE [LARGE SCALE GENOMIC DNA]</scope>
</reference>
<reference key="6">
    <citation type="journal article" date="2004" name="Genome Res.">
        <title>The status, quality, and expansion of the NIH full-length cDNA project: the Mammalian Gene Collection (MGC).</title>
        <authorList>
            <consortium name="The MGC Project Team"/>
        </authorList>
    </citation>
    <scope>NUCLEOTIDE SEQUENCE [LARGE SCALE MRNA] (ISOFORMS 1 AND 3)</scope>
    <source>
        <tissue>Melanoma</tissue>
        <tissue>Urinary bladder</tissue>
    </source>
</reference>
<reference key="7">
    <citation type="journal article" date="2006" name="J. Biol. Chem.">
        <title>Structural and functional properties of two human FXYD3 (Mat-8) isoforms.</title>
        <authorList>
            <person name="Bibert S."/>
            <person name="Roy S."/>
            <person name="Schaer D."/>
            <person name="Felley-Bosco E."/>
            <person name="Geering K."/>
        </authorList>
    </citation>
    <scope>PROTEIN SEQUENCE OF 21-27</scope>
    <scope>FUNCTION</scope>
    <scope>IDENTIFICATION IN SODIUM/POTASSIUM-TRANSPORTING ATPASE COMPLEX</scope>
    <scope>TISSUE SPECIFICITY</scope>
    <scope>ALTERNATIVE SPLICING (ISOFORMS 1 AND 2)</scope>
</reference>
<reference key="8">
    <citation type="journal article" date="2011" name="J. Biol. Chem.">
        <title>FXYD proteins reverse inhibition of the Na+-K+ pump mediated by glutathionylation of its beta1 subunit.</title>
        <authorList>
            <person name="Bibert S."/>
            <person name="Liu C.C."/>
            <person name="Figtree G.A."/>
            <person name="Garcia A."/>
            <person name="Hamilton E.J."/>
            <person name="Marassi F.M."/>
            <person name="Sweadner K.J."/>
            <person name="Cornelius F."/>
            <person name="Geering K."/>
            <person name="Rasmussen H.H."/>
        </authorList>
    </citation>
    <scope>FUNCTION</scope>
    <scope>INTERACTION WITH ATP1A1</scope>
    <scope>GLUTATHIONYLATION</scope>
    <scope>MUTAGENESIS OF CYS-44; CYS-49; CYS-61 AND CYS-63</scope>
</reference>
<organism>
    <name type="scientific">Homo sapiens</name>
    <name type="common">Human</name>
    <dbReference type="NCBI Taxonomy" id="9606"/>
    <lineage>
        <taxon>Eukaryota</taxon>
        <taxon>Metazoa</taxon>
        <taxon>Chordata</taxon>
        <taxon>Craniata</taxon>
        <taxon>Vertebrata</taxon>
        <taxon>Euteleostomi</taxon>
        <taxon>Mammalia</taxon>
        <taxon>Eutheria</taxon>
        <taxon>Euarchontoglires</taxon>
        <taxon>Primates</taxon>
        <taxon>Haplorrhini</taxon>
        <taxon>Catarrhini</taxon>
        <taxon>Hominidae</taxon>
        <taxon>Homo</taxon>
    </lineage>
</organism>
<protein>
    <recommendedName>
        <fullName>FXYD domain-containing ion transport regulator 3</fullName>
    </recommendedName>
    <alternativeName>
        <fullName>Chloride conductance inducer protein Mat-8</fullName>
    </alternativeName>
    <alternativeName>
        <fullName>Mammary tumor 8 kDa protein</fullName>
    </alternativeName>
    <alternativeName>
        <fullName>Phospholemman-like</fullName>
    </alternativeName>
    <alternativeName>
        <fullName evidence="10">Sodium/potassium-transporting ATPase subunit FXYD3</fullName>
    </alternativeName>
</protein>
<proteinExistence type="evidence at protein level"/>